<feature type="chain" id="PRO_0000261801" description="Large ribosomal subunit protein uL13">
    <location>
        <begin position="1"/>
        <end position="152"/>
    </location>
</feature>
<feature type="region of interest" description="Disordered" evidence="2">
    <location>
        <begin position="129"/>
        <end position="152"/>
    </location>
</feature>
<dbReference type="EMBL" id="CP000377">
    <property type="protein sequence ID" value="ABF64118.1"/>
    <property type="molecule type" value="Genomic_DNA"/>
</dbReference>
<dbReference type="RefSeq" id="WP_011538722.1">
    <property type="nucleotide sequence ID" value="NC_008044.1"/>
</dbReference>
<dbReference type="SMR" id="Q1GGU8"/>
<dbReference type="STRING" id="292414.TM1040_1385"/>
<dbReference type="KEGG" id="sit:TM1040_1385"/>
<dbReference type="eggNOG" id="COG0102">
    <property type="taxonomic scope" value="Bacteria"/>
</dbReference>
<dbReference type="HOGENOM" id="CLU_082184_2_0_5"/>
<dbReference type="OrthoDB" id="9801330at2"/>
<dbReference type="Proteomes" id="UP000000636">
    <property type="component" value="Chromosome"/>
</dbReference>
<dbReference type="GO" id="GO:0022625">
    <property type="term" value="C:cytosolic large ribosomal subunit"/>
    <property type="evidence" value="ECO:0007669"/>
    <property type="project" value="TreeGrafter"/>
</dbReference>
<dbReference type="GO" id="GO:0003729">
    <property type="term" value="F:mRNA binding"/>
    <property type="evidence" value="ECO:0007669"/>
    <property type="project" value="TreeGrafter"/>
</dbReference>
<dbReference type="GO" id="GO:0003735">
    <property type="term" value="F:structural constituent of ribosome"/>
    <property type="evidence" value="ECO:0007669"/>
    <property type="project" value="InterPro"/>
</dbReference>
<dbReference type="GO" id="GO:0017148">
    <property type="term" value="P:negative regulation of translation"/>
    <property type="evidence" value="ECO:0007669"/>
    <property type="project" value="TreeGrafter"/>
</dbReference>
<dbReference type="GO" id="GO:0006412">
    <property type="term" value="P:translation"/>
    <property type="evidence" value="ECO:0007669"/>
    <property type="project" value="UniProtKB-UniRule"/>
</dbReference>
<dbReference type="CDD" id="cd00392">
    <property type="entry name" value="Ribosomal_L13"/>
    <property type="match status" value="1"/>
</dbReference>
<dbReference type="FunFam" id="3.90.1180.10:FF:000001">
    <property type="entry name" value="50S ribosomal protein L13"/>
    <property type="match status" value="1"/>
</dbReference>
<dbReference type="Gene3D" id="3.90.1180.10">
    <property type="entry name" value="Ribosomal protein L13"/>
    <property type="match status" value="1"/>
</dbReference>
<dbReference type="HAMAP" id="MF_01366">
    <property type="entry name" value="Ribosomal_uL13"/>
    <property type="match status" value="1"/>
</dbReference>
<dbReference type="InterPro" id="IPR005822">
    <property type="entry name" value="Ribosomal_uL13"/>
</dbReference>
<dbReference type="InterPro" id="IPR005823">
    <property type="entry name" value="Ribosomal_uL13_bac-type"/>
</dbReference>
<dbReference type="InterPro" id="IPR023563">
    <property type="entry name" value="Ribosomal_uL13_CS"/>
</dbReference>
<dbReference type="InterPro" id="IPR036899">
    <property type="entry name" value="Ribosomal_uL13_sf"/>
</dbReference>
<dbReference type="NCBIfam" id="TIGR01066">
    <property type="entry name" value="rplM_bact"/>
    <property type="match status" value="1"/>
</dbReference>
<dbReference type="PANTHER" id="PTHR11545:SF2">
    <property type="entry name" value="LARGE RIBOSOMAL SUBUNIT PROTEIN UL13M"/>
    <property type="match status" value="1"/>
</dbReference>
<dbReference type="PANTHER" id="PTHR11545">
    <property type="entry name" value="RIBOSOMAL PROTEIN L13"/>
    <property type="match status" value="1"/>
</dbReference>
<dbReference type="Pfam" id="PF00572">
    <property type="entry name" value="Ribosomal_L13"/>
    <property type="match status" value="1"/>
</dbReference>
<dbReference type="PIRSF" id="PIRSF002181">
    <property type="entry name" value="Ribosomal_L13"/>
    <property type="match status" value="1"/>
</dbReference>
<dbReference type="SUPFAM" id="SSF52161">
    <property type="entry name" value="Ribosomal protein L13"/>
    <property type="match status" value="1"/>
</dbReference>
<dbReference type="PROSITE" id="PS00783">
    <property type="entry name" value="RIBOSOMAL_L13"/>
    <property type="match status" value="1"/>
</dbReference>
<name>RL13_RUEST</name>
<reference key="1">
    <citation type="submission" date="2006-05" db="EMBL/GenBank/DDBJ databases">
        <title>Complete sequence of chromosome of Silicibacter sp. TM1040.</title>
        <authorList>
            <consortium name="US DOE Joint Genome Institute"/>
            <person name="Copeland A."/>
            <person name="Lucas S."/>
            <person name="Lapidus A."/>
            <person name="Barry K."/>
            <person name="Detter J.C."/>
            <person name="Glavina del Rio T."/>
            <person name="Hammon N."/>
            <person name="Israni S."/>
            <person name="Dalin E."/>
            <person name="Tice H."/>
            <person name="Pitluck S."/>
            <person name="Brettin T."/>
            <person name="Bruce D."/>
            <person name="Han C."/>
            <person name="Tapia R."/>
            <person name="Goodwin L."/>
            <person name="Thompson L.S."/>
            <person name="Gilna P."/>
            <person name="Schmutz J."/>
            <person name="Larimer F."/>
            <person name="Land M."/>
            <person name="Hauser L."/>
            <person name="Kyrpides N."/>
            <person name="Kim E."/>
            <person name="Belas R."/>
            <person name="Moran M.A."/>
            <person name="Buchan A."/>
            <person name="Gonzalez J.M."/>
            <person name="Schell M.A."/>
            <person name="Sun F."/>
            <person name="Richardson P."/>
        </authorList>
    </citation>
    <scope>NUCLEOTIDE SEQUENCE [LARGE SCALE GENOMIC DNA]</scope>
    <source>
        <strain>TM1040</strain>
    </source>
</reference>
<sequence length="152" mass="17163">MKTFSATPADIDKKWIIIDAEGVVLGRLASIVATRLRGKHKPSFTPHMDMGDNVIVINAEKIQMTGKKREENFYWHTGHPGGIKSRTKQQILEGAHPERVVMQAVKRMLPGNRLSRQQMTNLRIYAGAEHPHEAQSPEVLDVKSMNKKNTRS</sequence>
<gene>
    <name evidence="1" type="primary">rplM</name>
    <name type="ordered locus">TM1040_1385</name>
</gene>
<protein>
    <recommendedName>
        <fullName evidence="1">Large ribosomal subunit protein uL13</fullName>
    </recommendedName>
    <alternativeName>
        <fullName evidence="3">50S ribosomal protein L13</fullName>
    </alternativeName>
</protein>
<comment type="function">
    <text evidence="1">This protein is one of the early assembly proteins of the 50S ribosomal subunit, although it is not seen to bind rRNA by itself. It is important during the early stages of 50S assembly.</text>
</comment>
<comment type="subunit">
    <text evidence="1">Part of the 50S ribosomal subunit.</text>
</comment>
<comment type="similarity">
    <text evidence="1">Belongs to the universal ribosomal protein uL13 family.</text>
</comment>
<keyword id="KW-1185">Reference proteome</keyword>
<keyword id="KW-0687">Ribonucleoprotein</keyword>
<keyword id="KW-0689">Ribosomal protein</keyword>
<organism>
    <name type="scientific">Ruegeria sp. (strain TM1040)</name>
    <name type="common">Silicibacter sp.</name>
    <dbReference type="NCBI Taxonomy" id="292414"/>
    <lineage>
        <taxon>Bacteria</taxon>
        <taxon>Pseudomonadati</taxon>
        <taxon>Pseudomonadota</taxon>
        <taxon>Alphaproteobacteria</taxon>
        <taxon>Rhodobacterales</taxon>
        <taxon>Roseobacteraceae</taxon>
        <taxon>Ruegeria</taxon>
    </lineage>
</organism>
<evidence type="ECO:0000255" key="1">
    <source>
        <dbReference type="HAMAP-Rule" id="MF_01366"/>
    </source>
</evidence>
<evidence type="ECO:0000256" key="2">
    <source>
        <dbReference type="SAM" id="MobiDB-lite"/>
    </source>
</evidence>
<evidence type="ECO:0000305" key="3"/>
<accession>Q1GGU8</accession>
<proteinExistence type="inferred from homology"/>